<keyword id="KW-0028">Amino-acid biosynthesis</keyword>
<keyword id="KW-0057">Aromatic amino acid biosynthesis</keyword>
<keyword id="KW-0274">FAD</keyword>
<keyword id="KW-0285">Flavoprotein</keyword>
<keyword id="KW-0288">FMN</keyword>
<keyword id="KW-0456">Lyase</keyword>
<keyword id="KW-0521">NADP</keyword>
<keyword id="KW-1185">Reference proteome</keyword>
<feature type="chain" id="PRO_0000140695" description="Chorismate synthase">
    <location>
        <begin position="1"/>
        <end position="368"/>
    </location>
</feature>
<feature type="binding site" evidence="1">
    <location>
        <position position="46"/>
    </location>
    <ligand>
        <name>NADP(+)</name>
        <dbReference type="ChEBI" id="CHEBI:58349"/>
    </ligand>
</feature>
<feature type="binding site" evidence="1">
    <location>
        <begin position="124"/>
        <end position="126"/>
    </location>
    <ligand>
        <name>FMN</name>
        <dbReference type="ChEBI" id="CHEBI:58210"/>
    </ligand>
</feature>
<feature type="binding site" evidence="1">
    <location>
        <position position="284"/>
    </location>
    <ligand>
        <name>FMN</name>
        <dbReference type="ChEBI" id="CHEBI:58210"/>
    </ligand>
</feature>
<feature type="binding site" evidence="1">
    <location>
        <begin position="299"/>
        <end position="303"/>
    </location>
    <ligand>
        <name>FMN</name>
        <dbReference type="ChEBI" id="CHEBI:58210"/>
    </ligand>
</feature>
<feature type="binding site" evidence="1">
    <location>
        <position position="326"/>
    </location>
    <ligand>
        <name>FMN</name>
        <dbReference type="ChEBI" id="CHEBI:58210"/>
    </ligand>
</feature>
<proteinExistence type="inferred from homology"/>
<dbReference type="EC" id="4.2.3.5" evidence="1"/>
<dbReference type="EMBL" id="AE009441">
    <property type="protein sequence ID" value="AAL63812.1"/>
    <property type="molecule type" value="Genomic_DNA"/>
</dbReference>
<dbReference type="RefSeq" id="WP_011008283.1">
    <property type="nucleotide sequence ID" value="NC_003364.1"/>
</dbReference>
<dbReference type="SMR" id="Q8ZW90"/>
<dbReference type="FunCoup" id="Q8ZW90">
    <property type="interactions" value="137"/>
</dbReference>
<dbReference type="STRING" id="178306.PAE1912"/>
<dbReference type="EnsemblBacteria" id="AAL63812">
    <property type="protein sequence ID" value="AAL63812"/>
    <property type="gene ID" value="PAE1912"/>
</dbReference>
<dbReference type="GeneID" id="1464135"/>
<dbReference type="KEGG" id="pai:PAE1912"/>
<dbReference type="PATRIC" id="fig|178306.9.peg.1416"/>
<dbReference type="eggNOG" id="arCOG04133">
    <property type="taxonomic scope" value="Archaea"/>
</dbReference>
<dbReference type="HOGENOM" id="CLU_034547_0_0_2"/>
<dbReference type="InParanoid" id="Q8ZW90"/>
<dbReference type="UniPathway" id="UPA00053">
    <property type="reaction ID" value="UER00090"/>
</dbReference>
<dbReference type="Proteomes" id="UP000002439">
    <property type="component" value="Chromosome"/>
</dbReference>
<dbReference type="GO" id="GO:0005829">
    <property type="term" value="C:cytosol"/>
    <property type="evidence" value="ECO:0000318"/>
    <property type="project" value="GO_Central"/>
</dbReference>
<dbReference type="GO" id="GO:0004107">
    <property type="term" value="F:chorismate synthase activity"/>
    <property type="evidence" value="ECO:0000318"/>
    <property type="project" value="GO_Central"/>
</dbReference>
<dbReference type="GO" id="GO:0010181">
    <property type="term" value="F:FMN binding"/>
    <property type="evidence" value="ECO:0000318"/>
    <property type="project" value="GO_Central"/>
</dbReference>
<dbReference type="GO" id="GO:0008652">
    <property type="term" value="P:amino acid biosynthetic process"/>
    <property type="evidence" value="ECO:0007669"/>
    <property type="project" value="UniProtKB-KW"/>
</dbReference>
<dbReference type="GO" id="GO:0009073">
    <property type="term" value="P:aromatic amino acid family biosynthetic process"/>
    <property type="evidence" value="ECO:0000318"/>
    <property type="project" value="GO_Central"/>
</dbReference>
<dbReference type="GO" id="GO:0009423">
    <property type="term" value="P:chorismate biosynthetic process"/>
    <property type="evidence" value="ECO:0000318"/>
    <property type="project" value="GO_Central"/>
</dbReference>
<dbReference type="CDD" id="cd07304">
    <property type="entry name" value="Chorismate_synthase"/>
    <property type="match status" value="1"/>
</dbReference>
<dbReference type="FunFam" id="3.60.150.10:FF:000015">
    <property type="entry name" value="Chorismate synthase"/>
    <property type="match status" value="1"/>
</dbReference>
<dbReference type="Gene3D" id="3.60.150.10">
    <property type="entry name" value="Chorismate synthase AroC"/>
    <property type="match status" value="1"/>
</dbReference>
<dbReference type="HAMAP" id="MF_00300">
    <property type="entry name" value="Chorismate_synth"/>
    <property type="match status" value="1"/>
</dbReference>
<dbReference type="InterPro" id="IPR000453">
    <property type="entry name" value="Chorismate_synth"/>
</dbReference>
<dbReference type="InterPro" id="IPR035904">
    <property type="entry name" value="Chorismate_synth_AroC_sf"/>
</dbReference>
<dbReference type="InterPro" id="IPR020541">
    <property type="entry name" value="Chorismate_synthase_CS"/>
</dbReference>
<dbReference type="NCBIfam" id="TIGR00033">
    <property type="entry name" value="aroC"/>
    <property type="match status" value="1"/>
</dbReference>
<dbReference type="NCBIfam" id="NF003793">
    <property type="entry name" value="PRK05382.1"/>
    <property type="match status" value="1"/>
</dbReference>
<dbReference type="PANTHER" id="PTHR21085">
    <property type="entry name" value="CHORISMATE SYNTHASE"/>
    <property type="match status" value="1"/>
</dbReference>
<dbReference type="PANTHER" id="PTHR21085:SF0">
    <property type="entry name" value="CHORISMATE SYNTHASE"/>
    <property type="match status" value="1"/>
</dbReference>
<dbReference type="Pfam" id="PF01264">
    <property type="entry name" value="Chorismate_synt"/>
    <property type="match status" value="1"/>
</dbReference>
<dbReference type="PIRSF" id="PIRSF001456">
    <property type="entry name" value="Chorismate_synth"/>
    <property type="match status" value="1"/>
</dbReference>
<dbReference type="SUPFAM" id="SSF103263">
    <property type="entry name" value="Chorismate synthase, AroC"/>
    <property type="match status" value="1"/>
</dbReference>
<dbReference type="PROSITE" id="PS00787">
    <property type="entry name" value="CHORISMATE_SYNTHASE_1"/>
    <property type="match status" value="1"/>
</dbReference>
<dbReference type="PROSITE" id="PS00788">
    <property type="entry name" value="CHORISMATE_SYNTHASE_2"/>
    <property type="match status" value="1"/>
</dbReference>
<name>AROC_PYRAE</name>
<gene>
    <name evidence="1" type="primary">aroC</name>
    <name type="ordered locus">PAE1912</name>
</gene>
<comment type="function">
    <text evidence="1">Catalyzes the anti-1,4-elimination of the C-3 phosphate and the C-6 proR hydrogen from 5-enolpyruvylshikimate-3-phosphate (EPSP) to yield chorismate, which is the branch point compound that serves as the starting substrate for the three terminal pathways of aromatic amino acid biosynthesis. This reaction introduces a second double bond into the aromatic ring system.</text>
</comment>
<comment type="catalytic activity">
    <reaction evidence="1">
        <text>5-O-(1-carboxyvinyl)-3-phosphoshikimate = chorismate + phosphate</text>
        <dbReference type="Rhea" id="RHEA:21020"/>
        <dbReference type="ChEBI" id="CHEBI:29748"/>
        <dbReference type="ChEBI" id="CHEBI:43474"/>
        <dbReference type="ChEBI" id="CHEBI:57701"/>
        <dbReference type="EC" id="4.2.3.5"/>
    </reaction>
</comment>
<comment type="cofactor">
    <cofactor evidence="1">
        <name>FMNH2</name>
        <dbReference type="ChEBI" id="CHEBI:57618"/>
    </cofactor>
    <text evidence="1">Reduced FMN (FMNH(2)).</text>
</comment>
<comment type="pathway">
    <text evidence="1">Metabolic intermediate biosynthesis; chorismate biosynthesis; chorismate from D-erythrose 4-phosphate and phosphoenolpyruvate: step 7/7.</text>
</comment>
<comment type="similarity">
    <text evidence="1">Belongs to the chorismate synthase family.</text>
</comment>
<sequence>MNTFGREFRITTFGESHGKAVGVVIDGVPAGLPLSEEDIKRELERRMFCHIHWLNPRCEPEEFEILSGVKNGHTQGTPIAIVIWNKRAISSYYDELWMKPRPGHADLAYYLKYGKFYDHRGGGRASGRTTAAIVAAGAVAKKLLSQLGVDVCGHIIELGGIEVRRSYTFEEVKSSWAKPLPVVDDEALAAMLETLRKNAAEGDSVGGGVEIWAVGVPPGLGEPHFGKIKAELAMAAFSIPAVVALDWGAGRALAKMRGSEANDPIIIKSGRPALESNKIGGVLGGITVGEPIYFRVWFKPTPSVRKPQRTVDLAKMEPAVLEFKGRYDVSVVPKALVALEAMTAITLADHALRAGLVRRDRPLRDPVV</sequence>
<accession>Q8ZW90</accession>
<protein>
    <recommendedName>
        <fullName evidence="1">Chorismate synthase</fullName>
        <shortName evidence="1">CS</shortName>
        <ecNumber evidence="1">4.2.3.5</ecNumber>
    </recommendedName>
    <alternativeName>
        <fullName evidence="1">5-enolpyruvylshikimate-3-phosphate phospholyase</fullName>
    </alternativeName>
</protein>
<organism>
    <name type="scientific">Pyrobaculum aerophilum (strain ATCC 51768 / DSM 7523 / JCM 9630 / CIP 104966 / NBRC 100827 / IM2)</name>
    <dbReference type="NCBI Taxonomy" id="178306"/>
    <lineage>
        <taxon>Archaea</taxon>
        <taxon>Thermoproteota</taxon>
        <taxon>Thermoprotei</taxon>
        <taxon>Thermoproteales</taxon>
        <taxon>Thermoproteaceae</taxon>
        <taxon>Pyrobaculum</taxon>
    </lineage>
</organism>
<reference key="1">
    <citation type="journal article" date="2002" name="Proc. Natl. Acad. Sci. U.S.A.">
        <title>Genome sequence of the hyperthermophilic crenarchaeon Pyrobaculum aerophilum.</title>
        <authorList>
            <person name="Fitz-Gibbon S.T."/>
            <person name="Ladner H."/>
            <person name="Kim U.-J."/>
            <person name="Stetter K.O."/>
            <person name="Simon M.I."/>
            <person name="Miller J.H."/>
        </authorList>
    </citation>
    <scope>NUCLEOTIDE SEQUENCE [LARGE SCALE GENOMIC DNA]</scope>
    <source>
        <strain>ATCC 51768 / DSM 7523 / JCM 9630 / CIP 104966 / NBRC 100827 / IM2</strain>
    </source>
</reference>
<evidence type="ECO:0000255" key="1">
    <source>
        <dbReference type="HAMAP-Rule" id="MF_00300"/>
    </source>
</evidence>